<protein>
    <recommendedName>
        <fullName evidence="5">Conotoxin Im23.4</fullName>
    </recommendedName>
    <alternativeName>
        <fullName evidence="4 7">Conopeptide im011</fullName>
    </alternativeName>
</protein>
<comment type="function">
    <text evidence="5">Probable neurotoxin.</text>
</comment>
<comment type="subcellular location">
    <subcellularLocation>
        <location evidence="3">Secreted</location>
    </subcellularLocation>
</comment>
<comment type="tissue specificity">
    <text evidence="6">Expressed by the venom duct.</text>
</comment>
<comment type="domain">
    <text evidence="5">The cysteine framework is XXIII (C-C-C-CC-C).</text>
</comment>
<comment type="similarity">
    <text evidence="5">Belongs to the conotoxin K superfamily.</text>
</comment>
<accession>A0A125S9E5</accession>
<proteinExistence type="evidence at protein level"/>
<feature type="signal peptide" evidence="2">
    <location>
        <begin position="1"/>
        <end position="22"/>
    </location>
</feature>
<feature type="propeptide" id="PRO_0000451001" evidence="5">
    <location>
        <begin position="23"/>
        <end position="30"/>
    </location>
</feature>
<feature type="chain" id="PRO_5007179705" description="Conotoxin Im23.4" evidence="5">
    <location>
        <begin position="31"/>
        <end position="70"/>
    </location>
</feature>
<feature type="disulfide bond" evidence="1">
    <location>
        <begin position="34"/>
        <end position="41"/>
    </location>
</feature>
<feature type="disulfide bond" evidence="1">
    <location>
        <begin position="45"/>
        <end position="53"/>
    </location>
</feature>
<feature type="disulfide bond" evidence="1">
    <location>
        <begin position="54"/>
        <end position="69"/>
    </location>
</feature>
<reference key="1">
    <citation type="journal article" date="2019" name="Mar. Drugs">
        <title>Transcriptomic-proteomic correlation in the predation-evoked venom of the cone snail, Conus imperialis.</title>
        <authorList>
            <person name="Jin A.H."/>
            <person name="Dutertre S."/>
            <person name="Dutt M."/>
            <person name="Lavergne V."/>
            <person name="Jones A."/>
            <person name="Lewis R.J."/>
            <person name="Alewood P.F."/>
        </authorList>
    </citation>
    <scope>NUCLEOTIDE SEQUENCE [MRNA]</scope>
    <scope>IDENTIFICATION BY MASS SPECTROMETRY</scope>
    <scope>SUBCELLULAR LOCATION</scope>
    <source>
        <tissue>Venom</tissue>
        <tissue>Venom duct</tissue>
    </source>
</reference>
<evidence type="ECO:0000250" key="1">
    <source>
        <dbReference type="UniProtKB" id="D0PX84"/>
    </source>
</evidence>
<evidence type="ECO:0000255" key="2"/>
<evidence type="ECO:0000269" key="3">
    <source>
    </source>
</evidence>
<evidence type="ECO:0000303" key="4">
    <source>
    </source>
</evidence>
<evidence type="ECO:0000305" key="5"/>
<evidence type="ECO:0000305" key="6">
    <source>
    </source>
</evidence>
<evidence type="ECO:0000312" key="7">
    <source>
        <dbReference type="EMBL" id="AME17669.1"/>
    </source>
</evidence>
<sequence>MIMRMTLTLFVLVVMTAASASGDALTEAKRVPYCGQTGAECYSWCKEQHLIRCCDFVKYVGMNPPADKCR</sequence>
<keyword id="KW-0165">Cleavage on pair of basic residues</keyword>
<keyword id="KW-1015">Disulfide bond</keyword>
<keyword id="KW-0528">Neurotoxin</keyword>
<keyword id="KW-0964">Secreted</keyword>
<keyword id="KW-0732">Signal</keyword>
<keyword id="KW-0800">Toxin</keyword>
<name>CKN4_CONIM</name>
<dbReference type="EMBL" id="KT377405">
    <property type="protein sequence ID" value="AME17669.1"/>
    <property type="molecule type" value="mRNA"/>
</dbReference>
<dbReference type="SMR" id="A0A125S9E5"/>
<dbReference type="GO" id="GO:0005576">
    <property type="term" value="C:extracellular region"/>
    <property type="evidence" value="ECO:0007669"/>
    <property type="project" value="UniProtKB-SubCell"/>
</dbReference>
<dbReference type="GO" id="GO:0090729">
    <property type="term" value="F:toxin activity"/>
    <property type="evidence" value="ECO:0007669"/>
    <property type="project" value="UniProtKB-KW"/>
</dbReference>
<dbReference type="Gene3D" id="1.10.10.2920">
    <property type="match status" value="1"/>
</dbReference>
<organism>
    <name type="scientific">Conus imperialis</name>
    <name type="common">Imperial cone</name>
    <dbReference type="NCBI Taxonomy" id="35631"/>
    <lineage>
        <taxon>Eukaryota</taxon>
        <taxon>Metazoa</taxon>
        <taxon>Spiralia</taxon>
        <taxon>Lophotrochozoa</taxon>
        <taxon>Mollusca</taxon>
        <taxon>Gastropoda</taxon>
        <taxon>Caenogastropoda</taxon>
        <taxon>Neogastropoda</taxon>
        <taxon>Conoidea</taxon>
        <taxon>Conidae</taxon>
        <taxon>Conus</taxon>
        <taxon>Stephanoconus</taxon>
    </lineage>
</organism>